<reference key="1">
    <citation type="journal article" date="2009" name="Appl. Environ. Microbiol.">
        <title>Rhizobium sp. strain NGR234 possesses a remarkable number of secretion systems.</title>
        <authorList>
            <person name="Schmeisser C."/>
            <person name="Liesegang H."/>
            <person name="Krysciak D."/>
            <person name="Bakkou N."/>
            <person name="Le Quere A."/>
            <person name="Wollherr A."/>
            <person name="Heinemeyer I."/>
            <person name="Morgenstern B."/>
            <person name="Pommerening-Roeser A."/>
            <person name="Flores M."/>
            <person name="Palacios R."/>
            <person name="Brenner S."/>
            <person name="Gottschalk G."/>
            <person name="Schmitz R.A."/>
            <person name="Broughton W.J."/>
            <person name="Perret X."/>
            <person name="Strittmatter A.W."/>
            <person name="Streit W.R."/>
        </authorList>
    </citation>
    <scope>NUCLEOTIDE SEQUENCE [LARGE SCALE GENOMIC DNA]</scope>
    <source>
        <strain>NBRC 101917 / NGR234</strain>
    </source>
</reference>
<dbReference type="EMBL" id="CP001389">
    <property type="protein sequence ID" value="ACP23884.1"/>
    <property type="molecule type" value="Genomic_DNA"/>
</dbReference>
<dbReference type="RefSeq" id="WP_012706669.1">
    <property type="nucleotide sequence ID" value="NC_012587.1"/>
</dbReference>
<dbReference type="RefSeq" id="YP_002824637.1">
    <property type="nucleotide sequence ID" value="NC_012587.1"/>
</dbReference>
<dbReference type="SMR" id="C3MF47"/>
<dbReference type="STRING" id="394.NGR_c00800"/>
<dbReference type="KEGG" id="rhi:NGR_c00800"/>
<dbReference type="PATRIC" id="fig|394.7.peg.2873"/>
<dbReference type="eggNOG" id="COG0218">
    <property type="taxonomic scope" value="Bacteria"/>
</dbReference>
<dbReference type="HOGENOM" id="CLU_033732_2_0_5"/>
<dbReference type="OrthoDB" id="9804921at2"/>
<dbReference type="Proteomes" id="UP000001054">
    <property type="component" value="Chromosome"/>
</dbReference>
<dbReference type="GO" id="GO:0005829">
    <property type="term" value="C:cytosol"/>
    <property type="evidence" value="ECO:0007669"/>
    <property type="project" value="TreeGrafter"/>
</dbReference>
<dbReference type="GO" id="GO:0005525">
    <property type="term" value="F:GTP binding"/>
    <property type="evidence" value="ECO:0007669"/>
    <property type="project" value="UniProtKB-UniRule"/>
</dbReference>
<dbReference type="GO" id="GO:0046872">
    <property type="term" value="F:metal ion binding"/>
    <property type="evidence" value="ECO:0007669"/>
    <property type="project" value="UniProtKB-KW"/>
</dbReference>
<dbReference type="GO" id="GO:0000917">
    <property type="term" value="P:division septum assembly"/>
    <property type="evidence" value="ECO:0007669"/>
    <property type="project" value="UniProtKB-KW"/>
</dbReference>
<dbReference type="CDD" id="cd01876">
    <property type="entry name" value="YihA_EngB"/>
    <property type="match status" value="1"/>
</dbReference>
<dbReference type="Gene3D" id="3.40.50.300">
    <property type="entry name" value="P-loop containing nucleotide triphosphate hydrolases"/>
    <property type="match status" value="1"/>
</dbReference>
<dbReference type="HAMAP" id="MF_00321">
    <property type="entry name" value="GTPase_EngB"/>
    <property type="match status" value="1"/>
</dbReference>
<dbReference type="InterPro" id="IPR030393">
    <property type="entry name" value="G_ENGB_dom"/>
</dbReference>
<dbReference type="InterPro" id="IPR006073">
    <property type="entry name" value="GTP-bd"/>
</dbReference>
<dbReference type="InterPro" id="IPR019987">
    <property type="entry name" value="GTP-bd_ribosome_bio_YsxC"/>
</dbReference>
<dbReference type="InterPro" id="IPR027417">
    <property type="entry name" value="P-loop_NTPase"/>
</dbReference>
<dbReference type="NCBIfam" id="TIGR03598">
    <property type="entry name" value="GTPase_YsxC"/>
    <property type="match status" value="1"/>
</dbReference>
<dbReference type="PANTHER" id="PTHR11649:SF13">
    <property type="entry name" value="ENGB-TYPE G DOMAIN-CONTAINING PROTEIN"/>
    <property type="match status" value="1"/>
</dbReference>
<dbReference type="PANTHER" id="PTHR11649">
    <property type="entry name" value="MSS1/TRME-RELATED GTP-BINDING PROTEIN"/>
    <property type="match status" value="1"/>
</dbReference>
<dbReference type="Pfam" id="PF01926">
    <property type="entry name" value="MMR_HSR1"/>
    <property type="match status" value="1"/>
</dbReference>
<dbReference type="SUPFAM" id="SSF52540">
    <property type="entry name" value="P-loop containing nucleoside triphosphate hydrolases"/>
    <property type="match status" value="1"/>
</dbReference>
<dbReference type="PROSITE" id="PS51706">
    <property type="entry name" value="G_ENGB"/>
    <property type="match status" value="1"/>
</dbReference>
<proteinExistence type="inferred from homology"/>
<sequence length="217" mass="23771">MAETTTKDDKPLFGRPWIFIRGVPSMKFLPPEGPAEIAFAGRSNVGKSSLINALVGHKGLARTSNTPGRTQELNYFVPDGYSGEADDLPPMALVDMPGYGYAQAPKEQVDAWTKLVFDYLRGRSTLKRVYVLIDARHGIKKNDEEVLALLDKAAVSYQIVLTKTDKIKAAGVPRLIAETLDKIKKRPAAYPEVLSTSSEKGAGIEDLRITIEQAVAR</sequence>
<keyword id="KW-0131">Cell cycle</keyword>
<keyword id="KW-0132">Cell division</keyword>
<keyword id="KW-0342">GTP-binding</keyword>
<keyword id="KW-0460">Magnesium</keyword>
<keyword id="KW-0479">Metal-binding</keyword>
<keyword id="KW-0547">Nucleotide-binding</keyword>
<keyword id="KW-1185">Reference proteome</keyword>
<keyword id="KW-0717">Septation</keyword>
<evidence type="ECO:0000255" key="1">
    <source>
        <dbReference type="HAMAP-Rule" id="MF_00321"/>
    </source>
</evidence>
<name>ENGB_SINFN</name>
<protein>
    <recommendedName>
        <fullName evidence="1">Probable GTP-binding protein EngB</fullName>
    </recommendedName>
</protein>
<gene>
    <name evidence="1" type="primary">engB</name>
    <name type="ordered locus">NGR_c00800</name>
</gene>
<organism>
    <name type="scientific">Sinorhizobium fredii (strain NBRC 101917 / NGR234)</name>
    <dbReference type="NCBI Taxonomy" id="394"/>
    <lineage>
        <taxon>Bacteria</taxon>
        <taxon>Pseudomonadati</taxon>
        <taxon>Pseudomonadota</taxon>
        <taxon>Alphaproteobacteria</taxon>
        <taxon>Hyphomicrobiales</taxon>
        <taxon>Rhizobiaceae</taxon>
        <taxon>Sinorhizobium/Ensifer group</taxon>
        <taxon>Sinorhizobium</taxon>
    </lineage>
</organism>
<feature type="chain" id="PRO_1000189930" description="Probable GTP-binding protein EngB">
    <location>
        <begin position="1"/>
        <end position="217"/>
    </location>
</feature>
<feature type="domain" description="EngB-type G" evidence="1">
    <location>
        <begin position="33"/>
        <end position="217"/>
    </location>
</feature>
<feature type="binding site" evidence="1">
    <location>
        <begin position="41"/>
        <end position="48"/>
    </location>
    <ligand>
        <name>GTP</name>
        <dbReference type="ChEBI" id="CHEBI:37565"/>
    </ligand>
</feature>
<feature type="binding site" evidence="1">
    <location>
        <position position="48"/>
    </location>
    <ligand>
        <name>Mg(2+)</name>
        <dbReference type="ChEBI" id="CHEBI:18420"/>
    </ligand>
</feature>
<feature type="binding site" evidence="1">
    <location>
        <begin position="68"/>
        <end position="72"/>
    </location>
    <ligand>
        <name>GTP</name>
        <dbReference type="ChEBI" id="CHEBI:37565"/>
    </ligand>
</feature>
<feature type="binding site" evidence="1">
    <location>
        <position position="70"/>
    </location>
    <ligand>
        <name>Mg(2+)</name>
        <dbReference type="ChEBI" id="CHEBI:18420"/>
    </ligand>
</feature>
<feature type="binding site" evidence="1">
    <location>
        <begin position="95"/>
        <end position="98"/>
    </location>
    <ligand>
        <name>GTP</name>
        <dbReference type="ChEBI" id="CHEBI:37565"/>
    </ligand>
</feature>
<feature type="binding site" evidence="1">
    <location>
        <begin position="162"/>
        <end position="165"/>
    </location>
    <ligand>
        <name>GTP</name>
        <dbReference type="ChEBI" id="CHEBI:37565"/>
    </ligand>
</feature>
<feature type="binding site" evidence="1">
    <location>
        <begin position="196"/>
        <end position="198"/>
    </location>
    <ligand>
        <name>GTP</name>
        <dbReference type="ChEBI" id="CHEBI:37565"/>
    </ligand>
</feature>
<accession>C3MF47</accession>
<comment type="function">
    <text evidence="1">Necessary for normal cell division and for the maintenance of normal septation.</text>
</comment>
<comment type="cofactor">
    <cofactor evidence="1">
        <name>Mg(2+)</name>
        <dbReference type="ChEBI" id="CHEBI:18420"/>
    </cofactor>
</comment>
<comment type="similarity">
    <text evidence="1">Belongs to the TRAFAC class TrmE-Era-EngA-EngB-Septin-like GTPase superfamily. EngB GTPase family.</text>
</comment>